<protein>
    <recommendedName>
        <fullName>Ferritin-2 heavy chain</fullName>
        <ecNumber>1.16.3.1</ecNumber>
    </recommendedName>
</protein>
<keyword id="KW-0408">Iron</keyword>
<keyword id="KW-0409">Iron storage</keyword>
<keyword id="KW-0479">Metal-binding</keyword>
<keyword id="KW-0560">Oxidoreductase</keyword>
<keyword id="KW-1185">Reference proteome</keyword>
<accession>P25320</accession>
<evidence type="ECO:0000250" key="1"/>
<evidence type="ECO:0000255" key="2">
    <source>
        <dbReference type="PROSITE-ProRule" id="PRU00085"/>
    </source>
</evidence>
<evidence type="ECO:0000305" key="3"/>
<proteinExistence type="evidence at transcript level"/>
<comment type="function">
    <text evidence="1">Stores iron in a soluble, non-toxic, readily available form. Important for iron homeostasis. Has ferroxidase activity. Iron is taken up in the ferrous form and deposited as ferric hydroxides after oxidation (By similarity).</text>
</comment>
<comment type="catalytic activity">
    <reaction>
        <text>4 Fe(2+) + O2 + 4 H(+) = 4 Fe(3+) + 2 H2O</text>
        <dbReference type="Rhea" id="RHEA:11148"/>
        <dbReference type="ChEBI" id="CHEBI:15377"/>
        <dbReference type="ChEBI" id="CHEBI:15378"/>
        <dbReference type="ChEBI" id="CHEBI:15379"/>
        <dbReference type="ChEBI" id="CHEBI:29033"/>
        <dbReference type="ChEBI" id="CHEBI:29034"/>
        <dbReference type="EC" id="1.16.3.1"/>
    </reaction>
</comment>
<comment type="subunit">
    <text evidence="1">Oligomer of 24 subunits. The functional molecule forms a roughly spherical shell with a diameter of 12 nm and contains a central cavity into which the insoluble mineral iron core is deposited (By similarity).</text>
</comment>
<comment type="similarity">
    <text evidence="3">Belongs to the ferritin family.</text>
</comment>
<name>FRIH2_SCHMA</name>
<dbReference type="EC" id="1.16.3.1"/>
<dbReference type="EMBL" id="M64539">
    <property type="protein sequence ID" value="AAA29881.1"/>
    <property type="molecule type" value="mRNA"/>
</dbReference>
<dbReference type="PIR" id="A45628">
    <property type="entry name" value="A45628"/>
</dbReference>
<dbReference type="SMR" id="P25320"/>
<dbReference type="FunCoup" id="P25320">
    <property type="interactions" value="23"/>
</dbReference>
<dbReference type="eggNOG" id="KOG2332">
    <property type="taxonomic scope" value="Eukaryota"/>
</dbReference>
<dbReference type="HOGENOM" id="CLU_065681_4_0_1"/>
<dbReference type="InParanoid" id="P25320"/>
<dbReference type="Proteomes" id="UP000008854">
    <property type="component" value="Unassembled WGS sequence"/>
</dbReference>
<dbReference type="GO" id="GO:0005737">
    <property type="term" value="C:cytoplasm"/>
    <property type="evidence" value="ECO:0007669"/>
    <property type="project" value="TreeGrafter"/>
</dbReference>
<dbReference type="GO" id="GO:0008199">
    <property type="term" value="F:ferric iron binding"/>
    <property type="evidence" value="ECO:0007669"/>
    <property type="project" value="InterPro"/>
</dbReference>
<dbReference type="GO" id="GO:0008198">
    <property type="term" value="F:ferrous iron binding"/>
    <property type="evidence" value="ECO:0007669"/>
    <property type="project" value="TreeGrafter"/>
</dbReference>
<dbReference type="GO" id="GO:0004322">
    <property type="term" value="F:ferroxidase activity"/>
    <property type="evidence" value="ECO:0007669"/>
    <property type="project" value="UniProtKB-EC"/>
</dbReference>
<dbReference type="GO" id="GO:0006879">
    <property type="term" value="P:intracellular iron ion homeostasis"/>
    <property type="evidence" value="ECO:0007669"/>
    <property type="project" value="UniProtKB-KW"/>
</dbReference>
<dbReference type="GO" id="GO:0006826">
    <property type="term" value="P:iron ion transport"/>
    <property type="evidence" value="ECO:0007669"/>
    <property type="project" value="InterPro"/>
</dbReference>
<dbReference type="CDD" id="cd01056">
    <property type="entry name" value="Euk_Ferritin"/>
    <property type="match status" value="1"/>
</dbReference>
<dbReference type="FunFam" id="1.20.1260.10:FF:000002">
    <property type="entry name" value="Ferritin, mitochondrial"/>
    <property type="match status" value="1"/>
</dbReference>
<dbReference type="Gene3D" id="1.20.1260.10">
    <property type="match status" value="1"/>
</dbReference>
<dbReference type="InterPro" id="IPR001519">
    <property type="entry name" value="Ferritin"/>
</dbReference>
<dbReference type="InterPro" id="IPR012347">
    <property type="entry name" value="Ferritin-like"/>
</dbReference>
<dbReference type="InterPro" id="IPR009040">
    <property type="entry name" value="Ferritin-like_diiron"/>
</dbReference>
<dbReference type="InterPro" id="IPR009078">
    <property type="entry name" value="Ferritin-like_SF"/>
</dbReference>
<dbReference type="InterPro" id="IPR014034">
    <property type="entry name" value="Ferritin_CS"/>
</dbReference>
<dbReference type="InterPro" id="IPR008331">
    <property type="entry name" value="Ferritin_DPS_dom"/>
</dbReference>
<dbReference type="PANTHER" id="PTHR11431">
    <property type="entry name" value="FERRITIN"/>
    <property type="match status" value="1"/>
</dbReference>
<dbReference type="PANTHER" id="PTHR11431:SF75">
    <property type="entry name" value="FERRITIN"/>
    <property type="match status" value="1"/>
</dbReference>
<dbReference type="Pfam" id="PF00210">
    <property type="entry name" value="Ferritin"/>
    <property type="match status" value="1"/>
</dbReference>
<dbReference type="SUPFAM" id="SSF47240">
    <property type="entry name" value="Ferritin-like"/>
    <property type="match status" value="1"/>
</dbReference>
<dbReference type="PROSITE" id="PS00540">
    <property type="entry name" value="FERRITIN_1"/>
    <property type="match status" value="1"/>
</dbReference>
<dbReference type="PROSITE" id="PS00204">
    <property type="entry name" value="FERRITIN_2"/>
    <property type="match status" value="1"/>
</dbReference>
<dbReference type="PROSITE" id="PS50905">
    <property type="entry name" value="FERRITIN_LIKE"/>
    <property type="match status" value="1"/>
</dbReference>
<gene>
    <name type="primary">SCM-2</name>
</gene>
<reference key="1">
    <citation type="journal article" date="1992" name="Mol. Biochem. Parasitol.">
        <title>Ferritins of Schistosoma mansoni: sequence comparison and expression in female and male worms.</title>
        <authorList>
            <person name="Dietzel J."/>
            <person name="Hirzmann J."/>
            <person name="Preis D."/>
            <person name="Symmons P."/>
            <person name="Kunz W."/>
        </authorList>
    </citation>
    <scope>NUCLEOTIDE SEQUENCE [MRNA]</scope>
</reference>
<feature type="chain" id="PRO_0000201083" description="Ferritin-2 heavy chain">
    <location>
        <begin position="1"/>
        <end position="172"/>
    </location>
</feature>
<feature type="domain" description="Ferritin-like diiron" evidence="2">
    <location>
        <begin position="8"/>
        <end position="157"/>
    </location>
</feature>
<feature type="binding site" evidence="2">
    <location>
        <position position="25"/>
    </location>
    <ligand>
        <name>Fe cation</name>
        <dbReference type="ChEBI" id="CHEBI:24875"/>
        <label>1</label>
    </ligand>
</feature>
<feature type="binding site" evidence="2">
    <location>
        <position position="60"/>
    </location>
    <ligand>
        <name>Fe cation</name>
        <dbReference type="ChEBI" id="CHEBI:24875"/>
        <label>1</label>
    </ligand>
</feature>
<feature type="binding site" evidence="2">
    <location>
        <position position="60"/>
    </location>
    <ligand>
        <name>Fe cation</name>
        <dbReference type="ChEBI" id="CHEBI:24875"/>
        <label>2</label>
    </ligand>
</feature>
<feature type="binding site" evidence="2">
    <location>
        <position position="63"/>
    </location>
    <ligand>
        <name>Fe cation</name>
        <dbReference type="ChEBI" id="CHEBI:24875"/>
        <label>1</label>
    </ligand>
</feature>
<feature type="binding site" evidence="2">
    <location>
        <position position="105"/>
    </location>
    <ligand>
        <name>Fe cation</name>
        <dbReference type="ChEBI" id="CHEBI:24875"/>
        <label>2</label>
    </ligand>
</feature>
<feature type="binding site" evidence="2">
    <location>
        <position position="139"/>
    </location>
    <ligand>
        <name>Fe cation</name>
        <dbReference type="ChEBI" id="CHEBI:24875"/>
        <label>2</label>
    </ligand>
</feature>
<organism>
    <name type="scientific">Schistosoma mansoni</name>
    <name type="common">Blood fluke</name>
    <dbReference type="NCBI Taxonomy" id="6183"/>
    <lineage>
        <taxon>Eukaryota</taxon>
        <taxon>Metazoa</taxon>
        <taxon>Spiralia</taxon>
        <taxon>Lophotrochozoa</taxon>
        <taxon>Platyhelminthes</taxon>
        <taxon>Trematoda</taxon>
        <taxon>Digenea</taxon>
        <taxon>Strigeidida</taxon>
        <taxon>Schistosomatoidea</taxon>
        <taxon>Schistosomatidae</taxon>
        <taxon>Schistosoma</taxon>
    </lineage>
</organism>
<sequence length="172" mass="19688">MSSSRARQSFATECENAINKQINVELQAAYDYMAFFTYFDRDDVSFPKAAEFFRKASHEEREHAEKLAKYQNKRVGRVQYSDINGPTKTEFSSLEDAMNTALGMEKAVSKSLLELHEVASKNNDPALADFIESEFLHEQEDAIKQFADYLTETQRVGKGLGEYLFDKLTLNE</sequence>